<accession>B8DDP2</accession>
<gene>
    <name evidence="1" type="primary">msrA</name>
    <name type="ordered locus">LMHCC_0696</name>
</gene>
<organism>
    <name type="scientific">Listeria monocytogenes serotype 4a (strain HCC23)</name>
    <dbReference type="NCBI Taxonomy" id="552536"/>
    <lineage>
        <taxon>Bacteria</taxon>
        <taxon>Bacillati</taxon>
        <taxon>Bacillota</taxon>
        <taxon>Bacilli</taxon>
        <taxon>Bacillales</taxon>
        <taxon>Listeriaceae</taxon>
        <taxon>Listeria</taxon>
    </lineage>
</organism>
<protein>
    <recommendedName>
        <fullName evidence="1">Peptide methionine sulfoxide reductase MsrA</fullName>
        <shortName evidence="1">Protein-methionine-S-oxide reductase</shortName>
        <ecNumber evidence="1">1.8.4.11</ecNumber>
    </recommendedName>
    <alternativeName>
        <fullName evidence="1">Peptide-methionine (S)-S-oxide reductase</fullName>
        <shortName evidence="1">Peptide Met(O) reductase</shortName>
    </alternativeName>
</protein>
<keyword id="KW-0560">Oxidoreductase</keyword>
<evidence type="ECO:0000255" key="1">
    <source>
        <dbReference type="HAMAP-Rule" id="MF_01401"/>
    </source>
</evidence>
<sequence>MTKESLEKATFAGGCFWCMVKPFDTQPGIEKVVSGYTGGHTVNPTYKEVCSGTTGHTEAIQITFDPAVFPYEKLVEVYWQQTDPTDAAGQFVDRGDSYRPVIFYHNEEQKEIAEKSKAALDASGRFKKPIVTEIAKAETFYPAEEYHQDFYKKEKAHYEGYQVASGRAAFIDANWKG</sequence>
<reference key="1">
    <citation type="journal article" date="2011" name="J. Bacteriol.">
        <title>Genome sequence of lineage III Listeria monocytogenes strain HCC23.</title>
        <authorList>
            <person name="Steele C.L."/>
            <person name="Donaldson J.R."/>
            <person name="Paul D."/>
            <person name="Banes M.M."/>
            <person name="Arick T."/>
            <person name="Bridges S.M."/>
            <person name="Lawrence M.L."/>
        </authorList>
    </citation>
    <scope>NUCLEOTIDE SEQUENCE [LARGE SCALE GENOMIC DNA]</scope>
    <source>
        <strain>HCC23</strain>
    </source>
</reference>
<feature type="chain" id="PRO_1000184564" description="Peptide methionine sulfoxide reductase MsrA">
    <location>
        <begin position="1"/>
        <end position="177"/>
    </location>
</feature>
<feature type="active site" evidence="1">
    <location>
        <position position="15"/>
    </location>
</feature>
<proteinExistence type="inferred from homology"/>
<dbReference type="EC" id="1.8.4.11" evidence="1"/>
<dbReference type="EMBL" id="CP001175">
    <property type="protein sequence ID" value="ACK39051.1"/>
    <property type="molecule type" value="Genomic_DNA"/>
</dbReference>
<dbReference type="RefSeq" id="WP_003723414.1">
    <property type="nucleotide sequence ID" value="NC_011660.1"/>
</dbReference>
<dbReference type="SMR" id="B8DDP2"/>
<dbReference type="KEGG" id="lmh:LMHCC_0696"/>
<dbReference type="HOGENOM" id="CLU_031040_10_1_9"/>
<dbReference type="GO" id="GO:0033744">
    <property type="term" value="F:L-methionine:thioredoxin-disulfide S-oxidoreductase activity"/>
    <property type="evidence" value="ECO:0007669"/>
    <property type="project" value="RHEA"/>
</dbReference>
<dbReference type="GO" id="GO:0008113">
    <property type="term" value="F:peptide-methionine (S)-S-oxide reductase activity"/>
    <property type="evidence" value="ECO:0007669"/>
    <property type="project" value="UniProtKB-UniRule"/>
</dbReference>
<dbReference type="GO" id="GO:0036211">
    <property type="term" value="P:protein modification process"/>
    <property type="evidence" value="ECO:0007669"/>
    <property type="project" value="UniProtKB-UniRule"/>
</dbReference>
<dbReference type="FunFam" id="3.30.1060.10:FF:000003">
    <property type="entry name" value="Peptide methionine sulfoxide reductase MsrA"/>
    <property type="match status" value="1"/>
</dbReference>
<dbReference type="Gene3D" id="3.30.1060.10">
    <property type="entry name" value="Peptide methionine sulphoxide reductase MsrA"/>
    <property type="match status" value="1"/>
</dbReference>
<dbReference type="HAMAP" id="MF_01401">
    <property type="entry name" value="MsrA"/>
    <property type="match status" value="1"/>
</dbReference>
<dbReference type="InterPro" id="IPR002569">
    <property type="entry name" value="Met_Sox_Rdtase_MsrA_dom"/>
</dbReference>
<dbReference type="InterPro" id="IPR036509">
    <property type="entry name" value="Met_Sox_Rdtase_MsrA_sf"/>
</dbReference>
<dbReference type="NCBIfam" id="TIGR00401">
    <property type="entry name" value="msrA"/>
    <property type="match status" value="1"/>
</dbReference>
<dbReference type="PANTHER" id="PTHR43774">
    <property type="entry name" value="PEPTIDE METHIONINE SULFOXIDE REDUCTASE"/>
    <property type="match status" value="1"/>
</dbReference>
<dbReference type="PANTHER" id="PTHR43774:SF1">
    <property type="entry name" value="PEPTIDE METHIONINE SULFOXIDE REDUCTASE MSRA 2"/>
    <property type="match status" value="1"/>
</dbReference>
<dbReference type="Pfam" id="PF01625">
    <property type="entry name" value="PMSR"/>
    <property type="match status" value="1"/>
</dbReference>
<dbReference type="SUPFAM" id="SSF55068">
    <property type="entry name" value="Peptide methionine sulfoxide reductase"/>
    <property type="match status" value="1"/>
</dbReference>
<name>MSRA_LISMH</name>
<comment type="function">
    <text evidence="1">Has an important function as a repair enzyme for proteins that have been inactivated by oxidation. Catalyzes the reversible oxidation-reduction of methionine sulfoxide in proteins to methionine.</text>
</comment>
<comment type="catalytic activity">
    <reaction evidence="1">
        <text>L-methionyl-[protein] + [thioredoxin]-disulfide + H2O = L-methionyl-(S)-S-oxide-[protein] + [thioredoxin]-dithiol</text>
        <dbReference type="Rhea" id="RHEA:14217"/>
        <dbReference type="Rhea" id="RHEA-COMP:10698"/>
        <dbReference type="Rhea" id="RHEA-COMP:10700"/>
        <dbReference type="Rhea" id="RHEA-COMP:12313"/>
        <dbReference type="Rhea" id="RHEA-COMP:12315"/>
        <dbReference type="ChEBI" id="CHEBI:15377"/>
        <dbReference type="ChEBI" id="CHEBI:16044"/>
        <dbReference type="ChEBI" id="CHEBI:29950"/>
        <dbReference type="ChEBI" id="CHEBI:44120"/>
        <dbReference type="ChEBI" id="CHEBI:50058"/>
        <dbReference type="EC" id="1.8.4.11"/>
    </reaction>
</comment>
<comment type="catalytic activity">
    <reaction evidence="1">
        <text>[thioredoxin]-disulfide + L-methionine + H2O = L-methionine (S)-S-oxide + [thioredoxin]-dithiol</text>
        <dbReference type="Rhea" id="RHEA:19993"/>
        <dbReference type="Rhea" id="RHEA-COMP:10698"/>
        <dbReference type="Rhea" id="RHEA-COMP:10700"/>
        <dbReference type="ChEBI" id="CHEBI:15377"/>
        <dbReference type="ChEBI" id="CHEBI:29950"/>
        <dbReference type="ChEBI" id="CHEBI:50058"/>
        <dbReference type="ChEBI" id="CHEBI:57844"/>
        <dbReference type="ChEBI" id="CHEBI:58772"/>
        <dbReference type="EC" id="1.8.4.11"/>
    </reaction>
</comment>
<comment type="similarity">
    <text evidence="1">Belongs to the MsrA Met sulfoxide reductase family.</text>
</comment>